<keyword id="KW-0028">Amino-acid biosynthesis</keyword>
<keyword id="KW-0963">Cytoplasm</keyword>
<keyword id="KW-0223">Dioxygenase</keyword>
<keyword id="KW-0408">Iron</keyword>
<keyword id="KW-0479">Metal-binding</keyword>
<keyword id="KW-0486">Methionine biosynthesis</keyword>
<keyword id="KW-0533">Nickel</keyword>
<keyword id="KW-0539">Nucleus</keyword>
<keyword id="KW-0560">Oxidoreductase</keyword>
<keyword id="KW-1185">Reference proteome</keyword>
<protein>
    <recommendedName>
        <fullName evidence="1">Acireductone dioxygenase</fullName>
    </recommendedName>
    <alternativeName>
        <fullName evidence="1">Acireductone dioxygenase (Fe(2+)-requiring)</fullName>
        <shortName evidence="1">ARD'</shortName>
        <shortName evidence="1">Fe-ARD</shortName>
        <ecNumber evidence="1">1.13.11.54</ecNumber>
    </alternativeName>
    <alternativeName>
        <fullName evidence="1">Acireductone dioxygenase (Ni(2+)-requiring)</fullName>
        <shortName evidence="1">ARD</shortName>
        <shortName evidence="1">Ni-ARD</shortName>
        <ecNumber evidence="1">1.13.11.53</ecNumber>
    </alternativeName>
</protein>
<accession>Q4WDE1</accession>
<dbReference type="EC" id="1.13.11.54" evidence="1"/>
<dbReference type="EC" id="1.13.11.53" evidence="1"/>
<dbReference type="EMBL" id="AAHF01000012">
    <property type="protein sequence ID" value="EAL85597.1"/>
    <property type="status" value="ALT_SEQ"/>
    <property type="molecule type" value="Genomic_DNA"/>
</dbReference>
<dbReference type="RefSeq" id="XP_747635.1">
    <property type="nucleotide sequence ID" value="XM_742542.1"/>
</dbReference>
<dbReference type="SMR" id="Q4WDE1"/>
<dbReference type="FunCoup" id="Q4WDE1">
    <property type="interactions" value="272"/>
</dbReference>
<dbReference type="STRING" id="330879.Q4WDE1"/>
<dbReference type="GeneID" id="3505296"/>
<dbReference type="KEGG" id="afm:AFUA_6G04430"/>
<dbReference type="eggNOG" id="KOG2107">
    <property type="taxonomic scope" value="Eukaryota"/>
</dbReference>
<dbReference type="HOGENOM" id="CLU_090154_0_0_1"/>
<dbReference type="InParanoid" id="Q4WDE1"/>
<dbReference type="OrthoDB" id="1867259at2759"/>
<dbReference type="UniPathway" id="UPA00904">
    <property type="reaction ID" value="UER00878"/>
</dbReference>
<dbReference type="Proteomes" id="UP000002530">
    <property type="component" value="Chromosome 6"/>
</dbReference>
<dbReference type="GO" id="GO:0005737">
    <property type="term" value="C:cytoplasm"/>
    <property type="evidence" value="ECO:0007669"/>
    <property type="project" value="UniProtKB-SubCell"/>
</dbReference>
<dbReference type="GO" id="GO:0005634">
    <property type="term" value="C:nucleus"/>
    <property type="evidence" value="ECO:0007669"/>
    <property type="project" value="UniProtKB-SubCell"/>
</dbReference>
<dbReference type="GO" id="GO:0010308">
    <property type="term" value="F:acireductone dioxygenase (Ni2+-requiring) activity"/>
    <property type="evidence" value="ECO:0007669"/>
    <property type="project" value="UniProtKB-UniRule"/>
</dbReference>
<dbReference type="GO" id="GO:0010309">
    <property type="term" value="F:acireductone dioxygenase [iron(II)-requiring] activity"/>
    <property type="evidence" value="ECO:0000318"/>
    <property type="project" value="GO_Central"/>
</dbReference>
<dbReference type="GO" id="GO:0005506">
    <property type="term" value="F:iron ion binding"/>
    <property type="evidence" value="ECO:0007669"/>
    <property type="project" value="UniProtKB-UniRule"/>
</dbReference>
<dbReference type="GO" id="GO:0016151">
    <property type="term" value="F:nickel cation binding"/>
    <property type="evidence" value="ECO:0007669"/>
    <property type="project" value="UniProtKB-UniRule"/>
</dbReference>
<dbReference type="GO" id="GO:0019509">
    <property type="term" value="P:L-methionine salvage from methylthioadenosine"/>
    <property type="evidence" value="ECO:0007669"/>
    <property type="project" value="UniProtKB-UniRule"/>
</dbReference>
<dbReference type="GO" id="GO:0006555">
    <property type="term" value="P:methionine metabolic process"/>
    <property type="evidence" value="ECO:0000318"/>
    <property type="project" value="GO_Central"/>
</dbReference>
<dbReference type="CDD" id="cd02232">
    <property type="entry name" value="cupin_ARD"/>
    <property type="match status" value="1"/>
</dbReference>
<dbReference type="FunFam" id="2.60.120.10:FF:000079">
    <property type="entry name" value="1,2-dihydroxy-3-keto-5-methylthiopentene dioxygenase"/>
    <property type="match status" value="1"/>
</dbReference>
<dbReference type="Gene3D" id="2.60.120.10">
    <property type="entry name" value="Jelly Rolls"/>
    <property type="match status" value="1"/>
</dbReference>
<dbReference type="HAMAP" id="MF_03154">
    <property type="entry name" value="Salvage_MtnD_euk"/>
    <property type="match status" value="1"/>
</dbReference>
<dbReference type="InterPro" id="IPR004313">
    <property type="entry name" value="ARD"/>
</dbReference>
<dbReference type="InterPro" id="IPR027496">
    <property type="entry name" value="ARD_euk"/>
</dbReference>
<dbReference type="InterPro" id="IPR014710">
    <property type="entry name" value="RmlC-like_jellyroll"/>
</dbReference>
<dbReference type="InterPro" id="IPR011051">
    <property type="entry name" value="RmlC_Cupin_sf"/>
</dbReference>
<dbReference type="PANTHER" id="PTHR23418">
    <property type="entry name" value="ACIREDUCTONE DIOXYGENASE"/>
    <property type="match status" value="1"/>
</dbReference>
<dbReference type="PANTHER" id="PTHR23418:SF0">
    <property type="entry name" value="ACIREDUCTONE DIOXYGENASE"/>
    <property type="match status" value="1"/>
</dbReference>
<dbReference type="Pfam" id="PF03079">
    <property type="entry name" value="ARD"/>
    <property type="match status" value="1"/>
</dbReference>
<dbReference type="SUPFAM" id="SSF51182">
    <property type="entry name" value="RmlC-like cupins"/>
    <property type="match status" value="1"/>
</dbReference>
<gene>
    <name type="primary">adi1</name>
    <name type="ORF">AFUA_6G04430</name>
</gene>
<organism>
    <name type="scientific">Aspergillus fumigatus (strain ATCC MYA-4609 / CBS 101355 / FGSC A1100 / Af293)</name>
    <name type="common">Neosartorya fumigata</name>
    <dbReference type="NCBI Taxonomy" id="330879"/>
    <lineage>
        <taxon>Eukaryota</taxon>
        <taxon>Fungi</taxon>
        <taxon>Dikarya</taxon>
        <taxon>Ascomycota</taxon>
        <taxon>Pezizomycotina</taxon>
        <taxon>Eurotiomycetes</taxon>
        <taxon>Eurotiomycetidae</taxon>
        <taxon>Eurotiales</taxon>
        <taxon>Aspergillaceae</taxon>
        <taxon>Aspergillus</taxon>
        <taxon>Aspergillus subgen. Fumigati</taxon>
    </lineage>
</organism>
<feature type="chain" id="PRO_0000414362" description="Acireductone dioxygenase">
    <location>
        <begin position="1"/>
        <end position="176"/>
    </location>
</feature>
<feature type="region of interest" description="Disordered" evidence="2">
    <location>
        <begin position="1"/>
        <end position="21"/>
    </location>
</feature>
<feature type="compositionally biased region" description="Basic and acidic residues" evidence="2">
    <location>
        <begin position="9"/>
        <end position="20"/>
    </location>
</feature>
<feature type="binding site" evidence="1">
    <location>
        <position position="81"/>
    </location>
    <ligand>
        <name>Fe(2+)</name>
        <dbReference type="ChEBI" id="CHEBI:29033"/>
        <note>for iron-dependent acireductone dioxygenase activity</note>
    </ligand>
</feature>
<feature type="binding site" evidence="1">
    <location>
        <position position="81"/>
    </location>
    <ligand>
        <name>Ni(2+)</name>
        <dbReference type="ChEBI" id="CHEBI:49786"/>
        <note>for nickel-dependent acireductone dioxygenase activity</note>
    </ligand>
</feature>
<feature type="binding site" evidence="1">
    <location>
        <position position="83"/>
    </location>
    <ligand>
        <name>Fe(2+)</name>
        <dbReference type="ChEBI" id="CHEBI:29033"/>
        <note>for iron-dependent acireductone dioxygenase activity</note>
    </ligand>
</feature>
<feature type="binding site" evidence="1">
    <location>
        <position position="83"/>
    </location>
    <ligand>
        <name>Ni(2+)</name>
        <dbReference type="ChEBI" id="CHEBI:49786"/>
        <note>for nickel-dependent acireductone dioxygenase activity</note>
    </ligand>
</feature>
<feature type="binding site" evidence="1">
    <location>
        <position position="87"/>
    </location>
    <ligand>
        <name>Fe(2+)</name>
        <dbReference type="ChEBI" id="CHEBI:29033"/>
        <note>for iron-dependent acireductone dioxygenase activity</note>
    </ligand>
</feature>
<feature type="binding site" evidence="1">
    <location>
        <position position="87"/>
    </location>
    <ligand>
        <name>Ni(2+)</name>
        <dbReference type="ChEBI" id="CHEBI:49786"/>
        <note>for nickel-dependent acireductone dioxygenase activity</note>
    </ligand>
</feature>
<feature type="binding site" evidence="1">
    <location>
        <position position="126"/>
    </location>
    <ligand>
        <name>Fe(2+)</name>
        <dbReference type="ChEBI" id="CHEBI:29033"/>
        <note>for iron-dependent acireductone dioxygenase activity</note>
    </ligand>
</feature>
<feature type="binding site" evidence="1">
    <location>
        <position position="126"/>
    </location>
    <ligand>
        <name>Ni(2+)</name>
        <dbReference type="ChEBI" id="CHEBI:49786"/>
        <note>for nickel-dependent acireductone dioxygenase activity</note>
    </ligand>
</feature>
<comment type="function">
    <text evidence="1">Catalyzes 2 different reactions between oxygen and the acireductone 1,2-dihydroxy-3-keto-5-methylthiopentene (DHK-MTPene) depending upon the metal bound in the active site. Fe-containing acireductone dioxygenase (Fe-ARD) produces formate and 2-keto-4-methylthiobutyrate (KMTB), the alpha-ketoacid precursor of methionine in the methionine recycle pathway. Ni-containing acireductone dioxygenase (Ni-ARD) produces methylthiopropionate, carbon monoxide and formate, and does not lie on the methionine recycle pathway.</text>
</comment>
<comment type="catalytic activity">
    <reaction evidence="1">
        <text>1,2-dihydroxy-5-(methylsulfanyl)pent-1-en-3-one + O2 = 4-methylsulfanyl-2-oxobutanoate + formate + 2 H(+)</text>
        <dbReference type="Rhea" id="RHEA:24504"/>
        <dbReference type="ChEBI" id="CHEBI:15378"/>
        <dbReference type="ChEBI" id="CHEBI:15379"/>
        <dbReference type="ChEBI" id="CHEBI:15740"/>
        <dbReference type="ChEBI" id="CHEBI:16723"/>
        <dbReference type="ChEBI" id="CHEBI:49252"/>
        <dbReference type="EC" id="1.13.11.54"/>
    </reaction>
</comment>
<comment type="catalytic activity">
    <reaction evidence="1">
        <text>1,2-dihydroxy-5-(methylsulfanyl)pent-1-en-3-one + O2 = 3-(methylsulfanyl)propanoate + CO + formate + 2 H(+)</text>
        <dbReference type="Rhea" id="RHEA:14161"/>
        <dbReference type="ChEBI" id="CHEBI:15378"/>
        <dbReference type="ChEBI" id="CHEBI:15379"/>
        <dbReference type="ChEBI" id="CHEBI:15740"/>
        <dbReference type="ChEBI" id="CHEBI:17245"/>
        <dbReference type="ChEBI" id="CHEBI:49016"/>
        <dbReference type="ChEBI" id="CHEBI:49252"/>
        <dbReference type="EC" id="1.13.11.53"/>
    </reaction>
</comment>
<comment type="cofactor">
    <cofactor evidence="1">
        <name>Fe(2+)</name>
        <dbReference type="ChEBI" id="CHEBI:29033"/>
    </cofactor>
    <cofactor evidence="1">
        <name>Ni(2+)</name>
        <dbReference type="ChEBI" id="CHEBI:49786"/>
    </cofactor>
    <text evidence="1">Binds either 1 Fe or Ni cation per monomer. Iron-binding promotes an acireductone dioxygenase reaction producing 2-keto-4-methylthiobutyrate, while nickel-binding promotes an acireductone dioxygenase reaction producing 3-(methylsulfanyl)propanoate.</text>
</comment>
<comment type="pathway">
    <text evidence="1">Amino-acid biosynthesis; L-methionine biosynthesis via salvage pathway; L-methionine from S-methyl-5-thio-alpha-D-ribose 1-phosphate: step 5/6.</text>
</comment>
<comment type="subcellular location">
    <subcellularLocation>
        <location evidence="1">Cytoplasm</location>
    </subcellularLocation>
    <subcellularLocation>
        <location evidence="1">Nucleus</location>
    </subcellularLocation>
</comment>
<comment type="similarity">
    <text evidence="1">Belongs to the acireductone dioxygenase (ARD) family.</text>
</comment>
<comment type="sequence caution" evidence="3">
    <conflict type="erroneous gene model prediction">
        <sequence resource="EMBL-CDS" id="EAL85597"/>
    </conflict>
</comment>
<sequence length="176" mass="20848">MKAYWYDNKPGDQREPHDSGRPVTVDYLASIGVQYYHFPSLESVNELAKERGYKNRDEIVVSPQAMGDVYEEKVKMFFNEHLHEDEEIRYIRDGEGYFDVRGQEDEWVRIKLAKDDLIILPAGIYHRFTTDDKNYVKAMRLFQEEPKWTPLNRGPDVDENSHRQSYLRTIQNKTVA</sequence>
<evidence type="ECO:0000255" key="1">
    <source>
        <dbReference type="HAMAP-Rule" id="MF_03154"/>
    </source>
</evidence>
<evidence type="ECO:0000256" key="2">
    <source>
        <dbReference type="SAM" id="MobiDB-lite"/>
    </source>
</evidence>
<evidence type="ECO:0000305" key="3"/>
<name>MTND_ASPFU</name>
<proteinExistence type="inferred from homology"/>
<reference key="1">
    <citation type="journal article" date="2005" name="Nature">
        <title>Genomic sequence of the pathogenic and allergenic filamentous fungus Aspergillus fumigatus.</title>
        <authorList>
            <person name="Nierman W.C."/>
            <person name="Pain A."/>
            <person name="Anderson M.J."/>
            <person name="Wortman J.R."/>
            <person name="Kim H.S."/>
            <person name="Arroyo J."/>
            <person name="Berriman M."/>
            <person name="Abe K."/>
            <person name="Archer D.B."/>
            <person name="Bermejo C."/>
            <person name="Bennett J.W."/>
            <person name="Bowyer P."/>
            <person name="Chen D."/>
            <person name="Collins M."/>
            <person name="Coulsen R."/>
            <person name="Davies R."/>
            <person name="Dyer P.S."/>
            <person name="Farman M.L."/>
            <person name="Fedorova N."/>
            <person name="Fedorova N.D."/>
            <person name="Feldblyum T.V."/>
            <person name="Fischer R."/>
            <person name="Fosker N."/>
            <person name="Fraser A."/>
            <person name="Garcia J.L."/>
            <person name="Garcia M.J."/>
            <person name="Goble A."/>
            <person name="Goldman G.H."/>
            <person name="Gomi K."/>
            <person name="Griffith-Jones S."/>
            <person name="Gwilliam R."/>
            <person name="Haas B.J."/>
            <person name="Haas H."/>
            <person name="Harris D.E."/>
            <person name="Horiuchi H."/>
            <person name="Huang J."/>
            <person name="Humphray S."/>
            <person name="Jimenez J."/>
            <person name="Keller N."/>
            <person name="Khouri H."/>
            <person name="Kitamoto K."/>
            <person name="Kobayashi T."/>
            <person name="Konzack S."/>
            <person name="Kulkarni R."/>
            <person name="Kumagai T."/>
            <person name="Lafton A."/>
            <person name="Latge J.-P."/>
            <person name="Li W."/>
            <person name="Lord A."/>
            <person name="Lu C."/>
            <person name="Majoros W.H."/>
            <person name="May G.S."/>
            <person name="Miller B.L."/>
            <person name="Mohamoud Y."/>
            <person name="Molina M."/>
            <person name="Monod M."/>
            <person name="Mouyna I."/>
            <person name="Mulligan S."/>
            <person name="Murphy L.D."/>
            <person name="O'Neil S."/>
            <person name="Paulsen I."/>
            <person name="Penalva M.A."/>
            <person name="Pertea M."/>
            <person name="Price C."/>
            <person name="Pritchard B.L."/>
            <person name="Quail M.A."/>
            <person name="Rabbinowitsch E."/>
            <person name="Rawlins N."/>
            <person name="Rajandream M.A."/>
            <person name="Reichard U."/>
            <person name="Renauld H."/>
            <person name="Robson G.D."/>
            <person name="Rodriguez de Cordoba S."/>
            <person name="Rodriguez-Pena J.M."/>
            <person name="Ronning C.M."/>
            <person name="Rutter S."/>
            <person name="Salzberg S.L."/>
            <person name="Sanchez M."/>
            <person name="Sanchez-Ferrero J.C."/>
            <person name="Saunders D."/>
            <person name="Seeger K."/>
            <person name="Squares R."/>
            <person name="Squares S."/>
            <person name="Takeuchi M."/>
            <person name="Tekaia F."/>
            <person name="Turner G."/>
            <person name="Vazquez de Aldana C.R."/>
            <person name="Weidman J."/>
            <person name="White O."/>
            <person name="Woodward J.R."/>
            <person name="Yu J.-H."/>
            <person name="Fraser C.M."/>
            <person name="Galagan J.E."/>
            <person name="Asai K."/>
            <person name="Machida M."/>
            <person name="Hall N."/>
            <person name="Barrell B.G."/>
            <person name="Denning D.W."/>
        </authorList>
    </citation>
    <scope>NUCLEOTIDE SEQUENCE [LARGE SCALE GENOMIC DNA]</scope>
    <source>
        <strain>ATCC MYA-4609 / CBS 101355 / FGSC A1100 / Af293</strain>
    </source>
</reference>